<reference key="1">
    <citation type="journal article" date="2000" name="Gene">
        <title>Cloning of a human gene closely related to the genes coding for the c-myc single-strand binding proteins.</title>
        <authorList>
            <person name="Penkov D."/>
            <person name="Ni R."/>
            <person name="Else C."/>
            <person name="Pinol-Roma S."/>
            <person name="Ramirez F."/>
            <person name="Tanaka S."/>
        </authorList>
    </citation>
    <scope>NUCLEOTIDE SEQUENCE [MRNA] (ISOFORM 4)</scope>
    <scope>FUNCTION</scope>
    <scope>RNA-BINDING</scope>
    <scope>TISSUE SPECIFICITY</scope>
    <scope>SUBCELLULAR LOCATION</scope>
    <source>
        <tissue>Fibroblast</tissue>
    </source>
</reference>
<reference key="2">
    <citation type="submission" date="2003-02" db="EMBL/GenBank/DDBJ databases">
        <title>Cloning and characterization of novel alternatively spliced transcripts of RBMS3: skeletal muscle mRNA level correlates with whole body insulin resistance.</title>
        <authorList>
            <person name="Lee Y.-H."/>
            <person name="Tokraks S."/>
            <person name="Bogardus C."/>
            <person name="Permana P.A."/>
        </authorList>
    </citation>
    <scope>NUCLEOTIDE SEQUENCE [MRNA] (ISOFORMS 1 AND 3)</scope>
</reference>
<reference key="3">
    <citation type="journal article" date="2004" name="Nat. Genet.">
        <title>Complete sequencing and characterization of 21,243 full-length human cDNAs.</title>
        <authorList>
            <person name="Ota T."/>
            <person name="Suzuki Y."/>
            <person name="Nishikawa T."/>
            <person name="Otsuki T."/>
            <person name="Sugiyama T."/>
            <person name="Irie R."/>
            <person name="Wakamatsu A."/>
            <person name="Hayashi K."/>
            <person name="Sato H."/>
            <person name="Nagai K."/>
            <person name="Kimura K."/>
            <person name="Makita H."/>
            <person name="Sekine M."/>
            <person name="Obayashi M."/>
            <person name="Nishi T."/>
            <person name="Shibahara T."/>
            <person name="Tanaka T."/>
            <person name="Ishii S."/>
            <person name="Yamamoto J."/>
            <person name="Saito K."/>
            <person name="Kawai Y."/>
            <person name="Isono Y."/>
            <person name="Nakamura Y."/>
            <person name="Nagahari K."/>
            <person name="Murakami K."/>
            <person name="Yasuda T."/>
            <person name="Iwayanagi T."/>
            <person name="Wagatsuma M."/>
            <person name="Shiratori A."/>
            <person name="Sudo H."/>
            <person name="Hosoiri T."/>
            <person name="Kaku Y."/>
            <person name="Kodaira H."/>
            <person name="Kondo H."/>
            <person name="Sugawara M."/>
            <person name="Takahashi M."/>
            <person name="Kanda K."/>
            <person name="Yokoi T."/>
            <person name="Furuya T."/>
            <person name="Kikkawa E."/>
            <person name="Omura Y."/>
            <person name="Abe K."/>
            <person name="Kamihara K."/>
            <person name="Katsuta N."/>
            <person name="Sato K."/>
            <person name="Tanikawa M."/>
            <person name="Yamazaki M."/>
            <person name="Ninomiya K."/>
            <person name="Ishibashi T."/>
            <person name="Yamashita H."/>
            <person name="Murakawa K."/>
            <person name="Fujimori K."/>
            <person name="Tanai H."/>
            <person name="Kimata M."/>
            <person name="Watanabe M."/>
            <person name="Hiraoka S."/>
            <person name="Chiba Y."/>
            <person name="Ishida S."/>
            <person name="Ono Y."/>
            <person name="Takiguchi S."/>
            <person name="Watanabe S."/>
            <person name="Yosida M."/>
            <person name="Hotuta T."/>
            <person name="Kusano J."/>
            <person name="Kanehori K."/>
            <person name="Takahashi-Fujii A."/>
            <person name="Hara H."/>
            <person name="Tanase T.-O."/>
            <person name="Nomura Y."/>
            <person name="Togiya S."/>
            <person name="Komai F."/>
            <person name="Hara R."/>
            <person name="Takeuchi K."/>
            <person name="Arita M."/>
            <person name="Imose N."/>
            <person name="Musashino K."/>
            <person name="Yuuki H."/>
            <person name="Oshima A."/>
            <person name="Sasaki N."/>
            <person name="Aotsuka S."/>
            <person name="Yoshikawa Y."/>
            <person name="Matsunawa H."/>
            <person name="Ichihara T."/>
            <person name="Shiohata N."/>
            <person name="Sano S."/>
            <person name="Moriya S."/>
            <person name="Momiyama H."/>
            <person name="Satoh N."/>
            <person name="Takami S."/>
            <person name="Terashima Y."/>
            <person name="Suzuki O."/>
            <person name="Nakagawa S."/>
            <person name="Senoh A."/>
            <person name="Mizoguchi H."/>
            <person name="Goto Y."/>
            <person name="Shimizu F."/>
            <person name="Wakebe H."/>
            <person name="Hishigaki H."/>
            <person name="Watanabe T."/>
            <person name="Sugiyama A."/>
            <person name="Takemoto M."/>
            <person name="Kawakami B."/>
            <person name="Yamazaki M."/>
            <person name="Watanabe K."/>
            <person name="Kumagai A."/>
            <person name="Itakura S."/>
            <person name="Fukuzumi Y."/>
            <person name="Fujimori Y."/>
            <person name="Komiyama M."/>
            <person name="Tashiro H."/>
            <person name="Tanigami A."/>
            <person name="Fujiwara T."/>
            <person name="Ono T."/>
            <person name="Yamada K."/>
            <person name="Fujii Y."/>
            <person name="Ozaki K."/>
            <person name="Hirao M."/>
            <person name="Ohmori Y."/>
            <person name="Kawabata A."/>
            <person name="Hikiji T."/>
            <person name="Kobatake N."/>
            <person name="Inagaki H."/>
            <person name="Ikema Y."/>
            <person name="Okamoto S."/>
            <person name="Okitani R."/>
            <person name="Kawakami T."/>
            <person name="Noguchi S."/>
            <person name="Itoh T."/>
            <person name="Shigeta K."/>
            <person name="Senba T."/>
            <person name="Matsumura K."/>
            <person name="Nakajima Y."/>
            <person name="Mizuno T."/>
            <person name="Morinaga M."/>
            <person name="Sasaki M."/>
            <person name="Togashi T."/>
            <person name="Oyama M."/>
            <person name="Hata H."/>
            <person name="Watanabe M."/>
            <person name="Komatsu T."/>
            <person name="Mizushima-Sugano J."/>
            <person name="Satoh T."/>
            <person name="Shirai Y."/>
            <person name="Takahashi Y."/>
            <person name="Nakagawa K."/>
            <person name="Okumura K."/>
            <person name="Nagase T."/>
            <person name="Nomura N."/>
            <person name="Kikuchi H."/>
            <person name="Masuho Y."/>
            <person name="Yamashita R."/>
            <person name="Nakai K."/>
            <person name="Yada T."/>
            <person name="Nakamura Y."/>
            <person name="Ohara O."/>
            <person name="Isogai T."/>
            <person name="Sugano S."/>
        </authorList>
    </citation>
    <scope>NUCLEOTIDE SEQUENCE [LARGE SCALE MRNA] (ISOFORM 5)</scope>
    <source>
        <tissue>Trachea</tissue>
    </source>
</reference>
<reference key="4">
    <citation type="journal article" date="2006" name="Nature">
        <title>The DNA sequence, annotation and analysis of human chromosome 3.</title>
        <authorList>
            <person name="Muzny D.M."/>
            <person name="Scherer S.E."/>
            <person name="Kaul R."/>
            <person name="Wang J."/>
            <person name="Yu J."/>
            <person name="Sudbrak R."/>
            <person name="Buhay C.J."/>
            <person name="Chen R."/>
            <person name="Cree A."/>
            <person name="Ding Y."/>
            <person name="Dugan-Rocha S."/>
            <person name="Gill R."/>
            <person name="Gunaratne P."/>
            <person name="Harris R.A."/>
            <person name="Hawes A.C."/>
            <person name="Hernandez J."/>
            <person name="Hodgson A.V."/>
            <person name="Hume J."/>
            <person name="Jackson A."/>
            <person name="Khan Z.M."/>
            <person name="Kovar-Smith C."/>
            <person name="Lewis L.R."/>
            <person name="Lozado R.J."/>
            <person name="Metzker M.L."/>
            <person name="Milosavljevic A."/>
            <person name="Miner G.R."/>
            <person name="Morgan M.B."/>
            <person name="Nazareth L.V."/>
            <person name="Scott G."/>
            <person name="Sodergren E."/>
            <person name="Song X.-Z."/>
            <person name="Steffen D."/>
            <person name="Wei S."/>
            <person name="Wheeler D.A."/>
            <person name="Wright M.W."/>
            <person name="Worley K.C."/>
            <person name="Yuan Y."/>
            <person name="Zhang Z."/>
            <person name="Adams C.Q."/>
            <person name="Ansari-Lari M.A."/>
            <person name="Ayele M."/>
            <person name="Brown M.J."/>
            <person name="Chen G."/>
            <person name="Chen Z."/>
            <person name="Clendenning J."/>
            <person name="Clerc-Blankenburg K.P."/>
            <person name="Chen R."/>
            <person name="Chen Z."/>
            <person name="Davis C."/>
            <person name="Delgado O."/>
            <person name="Dinh H.H."/>
            <person name="Dong W."/>
            <person name="Draper H."/>
            <person name="Ernst S."/>
            <person name="Fu G."/>
            <person name="Gonzalez-Garay M.L."/>
            <person name="Garcia D.K."/>
            <person name="Gillett W."/>
            <person name="Gu J."/>
            <person name="Hao B."/>
            <person name="Haugen E."/>
            <person name="Havlak P."/>
            <person name="He X."/>
            <person name="Hennig S."/>
            <person name="Hu S."/>
            <person name="Huang W."/>
            <person name="Jackson L.R."/>
            <person name="Jacob L.S."/>
            <person name="Kelly S.H."/>
            <person name="Kube M."/>
            <person name="Levy R."/>
            <person name="Li Z."/>
            <person name="Liu B."/>
            <person name="Liu J."/>
            <person name="Liu W."/>
            <person name="Lu J."/>
            <person name="Maheshwari M."/>
            <person name="Nguyen B.-V."/>
            <person name="Okwuonu G.O."/>
            <person name="Palmeiri A."/>
            <person name="Pasternak S."/>
            <person name="Perez L.M."/>
            <person name="Phelps K.A."/>
            <person name="Plopper F.J."/>
            <person name="Qiang B."/>
            <person name="Raymond C."/>
            <person name="Rodriguez R."/>
            <person name="Saenphimmachak C."/>
            <person name="Santibanez J."/>
            <person name="Shen H."/>
            <person name="Shen Y."/>
            <person name="Subramanian S."/>
            <person name="Tabor P.E."/>
            <person name="Verduzco D."/>
            <person name="Waldron L."/>
            <person name="Wang J."/>
            <person name="Wang J."/>
            <person name="Wang Q."/>
            <person name="Williams G.A."/>
            <person name="Wong G.K.-S."/>
            <person name="Yao Z."/>
            <person name="Zhang J."/>
            <person name="Zhang X."/>
            <person name="Zhao G."/>
            <person name="Zhou J."/>
            <person name="Zhou Y."/>
            <person name="Nelson D."/>
            <person name="Lehrach H."/>
            <person name="Reinhardt R."/>
            <person name="Naylor S.L."/>
            <person name="Yang H."/>
            <person name="Olson M."/>
            <person name="Weinstock G."/>
            <person name="Gibbs R.A."/>
        </authorList>
    </citation>
    <scope>NUCLEOTIDE SEQUENCE [LARGE SCALE GENOMIC DNA]</scope>
</reference>
<reference key="5">
    <citation type="submission" date="2005-07" db="EMBL/GenBank/DDBJ databases">
        <authorList>
            <person name="Mural R.J."/>
            <person name="Istrail S."/>
            <person name="Sutton G."/>
            <person name="Florea L."/>
            <person name="Halpern A.L."/>
            <person name="Mobarry C.M."/>
            <person name="Lippert R."/>
            <person name="Walenz B."/>
            <person name="Shatkay H."/>
            <person name="Dew I."/>
            <person name="Miller J.R."/>
            <person name="Flanigan M.J."/>
            <person name="Edwards N.J."/>
            <person name="Bolanos R."/>
            <person name="Fasulo D."/>
            <person name="Halldorsson B.V."/>
            <person name="Hannenhalli S."/>
            <person name="Turner R."/>
            <person name="Yooseph S."/>
            <person name="Lu F."/>
            <person name="Nusskern D.R."/>
            <person name="Shue B.C."/>
            <person name="Zheng X.H."/>
            <person name="Zhong F."/>
            <person name="Delcher A.L."/>
            <person name="Huson D.H."/>
            <person name="Kravitz S.A."/>
            <person name="Mouchard L."/>
            <person name="Reinert K."/>
            <person name="Remington K.A."/>
            <person name="Clark A.G."/>
            <person name="Waterman M.S."/>
            <person name="Eichler E.E."/>
            <person name="Adams M.D."/>
            <person name="Hunkapiller M.W."/>
            <person name="Myers E.W."/>
            <person name="Venter J.C."/>
        </authorList>
    </citation>
    <scope>NUCLEOTIDE SEQUENCE [LARGE SCALE GENOMIC DNA]</scope>
</reference>
<reference key="6">
    <citation type="journal article" date="2004" name="Genome Res.">
        <title>The status, quality, and expansion of the NIH full-length cDNA project: the Mammalian Gene Collection (MGC).</title>
        <authorList>
            <consortium name="The MGC Project Team"/>
        </authorList>
    </citation>
    <scope>NUCLEOTIDE SEQUENCE [LARGE SCALE MRNA] (ISOFORM 2)</scope>
</reference>
<evidence type="ECO:0000255" key="1">
    <source>
        <dbReference type="PROSITE-ProRule" id="PRU00176"/>
    </source>
</evidence>
<evidence type="ECO:0000256" key="2">
    <source>
        <dbReference type="SAM" id="MobiDB-lite"/>
    </source>
</evidence>
<evidence type="ECO:0000269" key="3">
    <source>
    </source>
</evidence>
<evidence type="ECO:0000303" key="4">
    <source>
    </source>
</evidence>
<evidence type="ECO:0000303" key="5">
    <source>
    </source>
</evidence>
<evidence type="ECO:0000303" key="6">
    <source>
    </source>
</evidence>
<evidence type="ECO:0000303" key="7">
    <source ref="2"/>
</evidence>
<evidence type="ECO:0000305" key="8"/>
<sequence length="437" mass="47840">MGKRLDQPQMYPQYTYYYPHYLQTKQSYAPAPHPMAPPSPSTNSSSNNSSNNSSGEQLSKTNLYIRGLPPGTTDQDLIKLCQPYGKIVSTKAILDKNTNQCKGYGFVDFDSPAAAQKAVASLKANGVQAQMAKQQEQDPTNLYISNLPISMDEQELENMLKPFGHVISTRILRDANGVSRGVGFARMESTEKCEVVIQHFNGKYLKTPPGIPAPSEPLLCKFADGGQKKRQNQSKYTQNGRPWPREGEAGMALTYDPTAAIQNGFYSSPYSIATNRMIPQTSITPFIAASPVSTYQVQSTSWMPHPPYVMQPTGAVITPTMDHPMSMQPANMMGPLTQQMNHLSLGTTGTIQSQDRIMILHQLLCQYMTAAAPMQGTYIPQYTPVPPTAVSIEGVVADTSPQTVAPSSQDTSGQQQQIAVDTSNEHAPAYSYQQSKP</sequence>
<name>RBMS3_HUMAN</name>
<accession>Q6XE24</accession>
<accession>A8K9S4</accession>
<accession>B7ZL17</accession>
<accession>G5E9J9</accession>
<accession>O75876</accession>
<accession>Q17RI0</accession>
<accession>Q6XE23</accession>
<proteinExistence type="evidence at protein level"/>
<gene>
    <name type="primary">RBMS3</name>
</gene>
<feature type="chain" id="PRO_0000274906" description="RNA-binding motif, single-stranded-interacting protein 3">
    <location>
        <begin position="1"/>
        <end position="437"/>
    </location>
</feature>
<feature type="domain" description="RRM 1" evidence="1">
    <location>
        <begin position="61"/>
        <end position="134"/>
    </location>
</feature>
<feature type="domain" description="RRM 2" evidence="1">
    <location>
        <begin position="140"/>
        <end position="225"/>
    </location>
</feature>
<feature type="region of interest" description="Disordered" evidence="2">
    <location>
        <begin position="28"/>
        <end position="57"/>
    </location>
</feature>
<feature type="region of interest" description="Disordered" evidence="2">
    <location>
        <begin position="399"/>
        <end position="437"/>
    </location>
</feature>
<feature type="compositionally biased region" description="Pro residues" evidence="2">
    <location>
        <begin position="31"/>
        <end position="40"/>
    </location>
</feature>
<feature type="compositionally biased region" description="Low complexity" evidence="2">
    <location>
        <begin position="41"/>
        <end position="54"/>
    </location>
</feature>
<feature type="compositionally biased region" description="Polar residues" evidence="2">
    <location>
        <begin position="399"/>
        <end position="422"/>
    </location>
</feature>
<feature type="splice variant" id="VSP_022927" description="In isoform 3." evidence="7">
    <location>
        <position position="26"/>
    </location>
</feature>
<feature type="splice variant" id="VSP_022928" description="In isoform 2." evidence="6">
    <original>G</original>
    <variation>GEVLRGRTVPRQNR</variation>
    <location>
        <position position="247"/>
    </location>
</feature>
<feature type="splice variant" id="VSP_022929" description="In isoform 3." evidence="7">
    <location>
        <begin position="297"/>
        <end position="313"/>
    </location>
</feature>
<feature type="splice variant" id="VSP_022930" description="In isoform 2, isoform 4 and isoform 5." evidence="4 5 6">
    <location>
        <begin position="351"/>
        <end position="366"/>
    </location>
</feature>
<feature type="splice variant" id="VSP_022931" description="In isoform 2 and isoform 4." evidence="4 6">
    <location>
        <position position="437"/>
    </location>
</feature>
<feature type="sequence conflict" description="In Ref. 2; AAP75556." evidence="8" ref="2">
    <original>I</original>
    <variation>L</variation>
    <location>
        <position position="93"/>
    </location>
</feature>
<feature type="sequence conflict" description="In Ref. 2; AAP75556." evidence="8" ref="2">
    <original>H</original>
    <variation>P</variation>
    <location>
        <position position="165"/>
    </location>
</feature>
<feature type="sequence conflict" description="In Ref. 3; BAF85478." evidence="8" ref="3">
    <original>I</original>
    <variation>V</variation>
    <location>
        <position position="418"/>
    </location>
</feature>
<comment type="function">
    <text evidence="3">Binds poly(A) and poly(U) oligoribonucleotides.</text>
</comment>
<comment type="subcellular location">
    <subcellularLocation>
        <location evidence="3">Cytoplasm</location>
    </subcellularLocation>
</comment>
<comment type="alternative products">
    <event type="alternative splicing"/>
    <isoform>
        <id>Q6XE24-1</id>
        <name>1</name>
        <name>DD23-L</name>
        <sequence type="displayed"/>
    </isoform>
    <isoform>
        <id>Q6XE24-2</id>
        <name>2</name>
        <sequence type="described" ref="VSP_022928 VSP_022930 VSP_022931"/>
    </isoform>
    <isoform>
        <id>Q6XE24-3</id>
        <name>3</name>
        <name>DD23-S</name>
        <sequence type="described" ref="VSP_022927 VSP_022929"/>
    </isoform>
    <isoform>
        <id>Q6XE24-4</id>
        <name>4</name>
        <sequence type="described" ref="VSP_022930 VSP_022931"/>
    </isoform>
    <isoform>
        <id>Q6XE24-5</id>
        <name>5</name>
        <sequence type="described" ref="VSP_022930"/>
    </isoform>
</comment>
<comment type="tissue specificity">
    <text evidence="3">Expressed in fetal brain, fetal lung, fetal liver, heart, brain, placenta, lung, liver, muscle, kidney and pancreas.</text>
</comment>
<comment type="sequence caution" evidence="8">
    <conflict type="frameshift">
        <sequence resource="EMBL-CDS" id="AAC63910"/>
    </conflict>
</comment>
<protein>
    <recommendedName>
        <fullName>RNA-binding motif, single-stranded-interacting protein 3</fullName>
    </recommendedName>
</protein>
<organism>
    <name type="scientific">Homo sapiens</name>
    <name type="common">Human</name>
    <dbReference type="NCBI Taxonomy" id="9606"/>
    <lineage>
        <taxon>Eukaryota</taxon>
        <taxon>Metazoa</taxon>
        <taxon>Chordata</taxon>
        <taxon>Craniata</taxon>
        <taxon>Vertebrata</taxon>
        <taxon>Euteleostomi</taxon>
        <taxon>Mammalia</taxon>
        <taxon>Eutheria</taxon>
        <taxon>Euarchontoglires</taxon>
        <taxon>Primates</taxon>
        <taxon>Haplorrhini</taxon>
        <taxon>Catarrhini</taxon>
        <taxon>Hominidae</taxon>
        <taxon>Homo</taxon>
    </lineage>
</organism>
<dbReference type="EMBL" id="AF023259">
    <property type="protein sequence ID" value="AAC63910.1"/>
    <property type="status" value="ALT_FRAME"/>
    <property type="molecule type" value="mRNA"/>
</dbReference>
<dbReference type="EMBL" id="AY236871">
    <property type="protein sequence ID" value="AAP75555.1"/>
    <property type="molecule type" value="mRNA"/>
</dbReference>
<dbReference type="EMBL" id="AY236872">
    <property type="protein sequence ID" value="AAP75556.1"/>
    <property type="molecule type" value="mRNA"/>
</dbReference>
<dbReference type="EMBL" id="AK292789">
    <property type="protein sequence ID" value="BAF85478.1"/>
    <property type="molecule type" value="mRNA"/>
</dbReference>
<dbReference type="EMBL" id="AC012262">
    <property type="status" value="NOT_ANNOTATED_CDS"/>
    <property type="molecule type" value="Genomic_DNA"/>
</dbReference>
<dbReference type="EMBL" id="AC021068">
    <property type="status" value="NOT_ANNOTATED_CDS"/>
    <property type="molecule type" value="Genomic_DNA"/>
</dbReference>
<dbReference type="EMBL" id="AC092795">
    <property type="status" value="NOT_ANNOTATED_CDS"/>
    <property type="molecule type" value="Genomic_DNA"/>
</dbReference>
<dbReference type="EMBL" id="AC092796">
    <property type="status" value="NOT_ANNOTATED_CDS"/>
    <property type="molecule type" value="Genomic_DNA"/>
</dbReference>
<dbReference type="EMBL" id="AC097633">
    <property type="status" value="NOT_ANNOTATED_CDS"/>
    <property type="molecule type" value="Genomic_DNA"/>
</dbReference>
<dbReference type="EMBL" id="AC098650">
    <property type="status" value="NOT_ANNOTATED_CDS"/>
    <property type="molecule type" value="Genomic_DNA"/>
</dbReference>
<dbReference type="EMBL" id="AC099048">
    <property type="status" value="NOT_ANNOTATED_CDS"/>
    <property type="molecule type" value="Genomic_DNA"/>
</dbReference>
<dbReference type="EMBL" id="CH471055">
    <property type="protein sequence ID" value="EAW64405.1"/>
    <property type="molecule type" value="Genomic_DNA"/>
</dbReference>
<dbReference type="EMBL" id="BC117315">
    <property type="protein sequence ID" value="AAI17316.1"/>
    <property type="molecule type" value="mRNA"/>
</dbReference>
<dbReference type="EMBL" id="BC143521">
    <property type="protein sequence ID" value="AAI43522.1"/>
    <property type="molecule type" value="mRNA"/>
</dbReference>
<dbReference type="CCDS" id="CCDS33724.1">
    <molecule id="Q6XE24-1"/>
</dbReference>
<dbReference type="CCDS" id="CCDS33725.1">
    <molecule id="Q6XE24-3"/>
</dbReference>
<dbReference type="CCDS" id="CCDS33726.1">
    <molecule id="Q6XE24-4"/>
</dbReference>
<dbReference type="CCDS" id="CCDS54557.1">
    <molecule id="Q6XE24-2"/>
</dbReference>
<dbReference type="CCDS" id="CCDS54558.1">
    <molecule id="Q6XE24-5"/>
</dbReference>
<dbReference type="RefSeq" id="NP_001003792.1">
    <molecule id="Q6XE24-3"/>
    <property type="nucleotide sequence ID" value="NM_001003792.3"/>
</dbReference>
<dbReference type="RefSeq" id="NP_001003793.1">
    <molecule id="Q6XE24-1"/>
    <property type="nucleotide sequence ID" value="NM_001003793.3"/>
</dbReference>
<dbReference type="RefSeq" id="NP_001171182.1">
    <molecule id="Q6XE24-5"/>
    <property type="nucleotide sequence ID" value="NM_001177711.2"/>
</dbReference>
<dbReference type="RefSeq" id="NP_001171183.1">
    <molecule id="Q6XE24-2"/>
    <property type="nucleotide sequence ID" value="NM_001177712.2"/>
</dbReference>
<dbReference type="RefSeq" id="NP_055298.2">
    <molecule id="Q6XE24-4"/>
    <property type="nucleotide sequence ID" value="NM_014483.4"/>
</dbReference>
<dbReference type="SMR" id="Q6XE24"/>
<dbReference type="BioGRID" id="118126">
    <property type="interactions" value="50"/>
</dbReference>
<dbReference type="FunCoup" id="Q6XE24">
    <property type="interactions" value="1727"/>
</dbReference>
<dbReference type="IntAct" id="Q6XE24">
    <property type="interactions" value="40"/>
</dbReference>
<dbReference type="STRING" id="9606.ENSP00000373277"/>
<dbReference type="GlyGen" id="Q6XE24">
    <property type="glycosylation" value="2 sites, 1 O-linked glycan (1 site)"/>
</dbReference>
<dbReference type="iPTMnet" id="Q6XE24"/>
<dbReference type="PhosphoSitePlus" id="Q6XE24"/>
<dbReference type="BioMuta" id="RBMS3"/>
<dbReference type="DMDM" id="74762382"/>
<dbReference type="jPOST" id="Q6XE24"/>
<dbReference type="MassIVE" id="Q6XE24"/>
<dbReference type="PaxDb" id="9606-ENSP00000373277"/>
<dbReference type="PeptideAtlas" id="Q6XE24"/>
<dbReference type="ProteomicsDB" id="33960"/>
<dbReference type="ProteomicsDB" id="67796">
    <molecule id="Q6XE24-1"/>
</dbReference>
<dbReference type="ProteomicsDB" id="67797">
    <molecule id="Q6XE24-2"/>
</dbReference>
<dbReference type="ProteomicsDB" id="67798">
    <molecule id="Q6XE24-3"/>
</dbReference>
<dbReference type="ProteomicsDB" id="67799">
    <molecule id="Q6XE24-4"/>
</dbReference>
<dbReference type="Antibodypedia" id="11544">
    <property type="antibodies" value="183 antibodies from 25 providers"/>
</dbReference>
<dbReference type="DNASU" id="27303"/>
<dbReference type="Ensembl" id="ENST00000273139.13">
    <molecule id="Q6XE24-4"/>
    <property type="protein sequence ID" value="ENSP00000273139.9"/>
    <property type="gene ID" value="ENSG00000144642.22"/>
</dbReference>
<dbReference type="Ensembl" id="ENST00000383766.6">
    <molecule id="Q6XE24-3"/>
    <property type="protein sequence ID" value="ENSP00000373276.2"/>
    <property type="gene ID" value="ENSG00000144642.22"/>
</dbReference>
<dbReference type="Ensembl" id="ENST00000383767.7">
    <molecule id="Q6XE24-1"/>
    <property type="protein sequence ID" value="ENSP00000373277.2"/>
    <property type="gene ID" value="ENSG00000144642.22"/>
</dbReference>
<dbReference type="Ensembl" id="ENST00000452462.5">
    <molecule id="Q6XE24-5"/>
    <property type="protein sequence ID" value="ENSP00000397926.1"/>
    <property type="gene ID" value="ENSG00000144642.22"/>
</dbReference>
<dbReference type="Ensembl" id="ENST00000456853.1">
    <molecule id="Q6XE24-2"/>
    <property type="protein sequence ID" value="ENSP00000400519.1"/>
    <property type="gene ID" value="ENSG00000144642.22"/>
</dbReference>
<dbReference type="GeneID" id="27303"/>
<dbReference type="KEGG" id="hsa:27303"/>
<dbReference type="MANE-Select" id="ENST00000383767.7">
    <property type="protein sequence ID" value="ENSP00000373277.2"/>
    <property type="RefSeq nucleotide sequence ID" value="NM_001003793.3"/>
    <property type="RefSeq protein sequence ID" value="NP_001003793.1"/>
</dbReference>
<dbReference type="UCSC" id="uc003cek.4">
    <molecule id="Q6XE24-1"/>
    <property type="organism name" value="human"/>
</dbReference>
<dbReference type="AGR" id="HGNC:13427"/>
<dbReference type="CTD" id="27303"/>
<dbReference type="DisGeNET" id="27303"/>
<dbReference type="GeneCards" id="RBMS3"/>
<dbReference type="HGNC" id="HGNC:13427">
    <property type="gene designation" value="RBMS3"/>
</dbReference>
<dbReference type="HPA" id="ENSG00000144642">
    <property type="expression patterns" value="Low tissue specificity"/>
</dbReference>
<dbReference type="MIM" id="605786">
    <property type="type" value="gene"/>
</dbReference>
<dbReference type="neXtProt" id="NX_Q6XE24"/>
<dbReference type="OpenTargets" id="ENSG00000144642"/>
<dbReference type="PharmGKB" id="PA34276"/>
<dbReference type="VEuPathDB" id="HostDB:ENSG00000144642"/>
<dbReference type="eggNOG" id="KOG4733">
    <property type="taxonomic scope" value="Eukaryota"/>
</dbReference>
<dbReference type="GeneTree" id="ENSGT00940000157131"/>
<dbReference type="InParanoid" id="Q6XE24"/>
<dbReference type="OMA" id="LGTTGTX"/>
<dbReference type="OrthoDB" id="271725at2759"/>
<dbReference type="PAN-GO" id="Q6XE24">
    <property type="GO annotations" value="6 GO annotations based on evolutionary models"/>
</dbReference>
<dbReference type="PhylomeDB" id="Q6XE24"/>
<dbReference type="TreeFam" id="TF314644"/>
<dbReference type="PathwayCommons" id="Q6XE24"/>
<dbReference type="SignaLink" id="Q6XE24"/>
<dbReference type="BioGRID-ORCS" id="27303">
    <property type="hits" value="11 hits in 1144 CRISPR screens"/>
</dbReference>
<dbReference type="ChiTaRS" id="RBMS3">
    <property type="organism name" value="human"/>
</dbReference>
<dbReference type="GenomeRNAi" id="27303"/>
<dbReference type="Pharos" id="Q6XE24">
    <property type="development level" value="Tbio"/>
</dbReference>
<dbReference type="PRO" id="PR:Q6XE24"/>
<dbReference type="Proteomes" id="UP000005640">
    <property type="component" value="Chromosome 3"/>
</dbReference>
<dbReference type="RNAct" id="Q6XE24">
    <property type="molecule type" value="protein"/>
</dbReference>
<dbReference type="Bgee" id="ENSG00000144642">
    <property type="expression patterns" value="Expressed in trigeminal ganglion and 191 other cell types or tissues"/>
</dbReference>
<dbReference type="ExpressionAtlas" id="Q6XE24">
    <property type="expression patterns" value="baseline and differential"/>
</dbReference>
<dbReference type="GO" id="GO:0005737">
    <property type="term" value="C:cytoplasm"/>
    <property type="evidence" value="ECO:0000314"/>
    <property type="project" value="UniProtKB"/>
</dbReference>
<dbReference type="GO" id="GO:0005829">
    <property type="term" value="C:cytosol"/>
    <property type="evidence" value="ECO:0000318"/>
    <property type="project" value="GO_Central"/>
</dbReference>
<dbReference type="GO" id="GO:0005634">
    <property type="term" value="C:nucleus"/>
    <property type="evidence" value="ECO:0000318"/>
    <property type="project" value="GO_Central"/>
</dbReference>
<dbReference type="GO" id="GO:1990904">
    <property type="term" value="C:ribonucleoprotein complex"/>
    <property type="evidence" value="ECO:0000318"/>
    <property type="project" value="GO_Central"/>
</dbReference>
<dbReference type="GO" id="GO:0035925">
    <property type="term" value="F:mRNA 3'-UTR AU-rich region binding"/>
    <property type="evidence" value="ECO:0000314"/>
    <property type="project" value="UniProtKB"/>
</dbReference>
<dbReference type="GO" id="GO:0003730">
    <property type="term" value="F:mRNA 3'-UTR binding"/>
    <property type="evidence" value="ECO:0000318"/>
    <property type="project" value="GO_Central"/>
</dbReference>
<dbReference type="GO" id="GO:0008143">
    <property type="term" value="F:poly(A) binding"/>
    <property type="evidence" value="ECO:0000314"/>
    <property type="project" value="UniProtKB"/>
</dbReference>
<dbReference type="GO" id="GO:0008266">
    <property type="term" value="F:poly(U) RNA binding"/>
    <property type="evidence" value="ECO:0000314"/>
    <property type="project" value="UniProtKB"/>
</dbReference>
<dbReference type="GO" id="GO:0002357">
    <property type="term" value="P:defense response to tumor cell"/>
    <property type="evidence" value="ECO:0000315"/>
    <property type="project" value="UniProtKB"/>
</dbReference>
<dbReference type="GO" id="GO:0090090">
    <property type="term" value="P:negative regulation of canonical Wnt signaling pathway"/>
    <property type="evidence" value="ECO:0000315"/>
    <property type="project" value="UniProtKB"/>
</dbReference>
<dbReference type="GO" id="GO:0010629">
    <property type="term" value="P:negative regulation of gene expression"/>
    <property type="evidence" value="ECO:0000315"/>
    <property type="project" value="UniProtKB"/>
</dbReference>
<dbReference type="GO" id="GO:0010628">
    <property type="term" value="P:positive regulation of gene expression"/>
    <property type="evidence" value="ECO:0000315"/>
    <property type="project" value="UniProtKB"/>
</dbReference>
<dbReference type="GO" id="GO:0045727">
    <property type="term" value="P:positive regulation of translation"/>
    <property type="evidence" value="ECO:0007669"/>
    <property type="project" value="Ensembl"/>
</dbReference>
<dbReference type="CDD" id="cd12472">
    <property type="entry name" value="RRM1_RBMS3"/>
    <property type="match status" value="1"/>
</dbReference>
<dbReference type="CDD" id="cd12475">
    <property type="entry name" value="RRM2_RBMS3"/>
    <property type="match status" value="1"/>
</dbReference>
<dbReference type="FunFam" id="3.30.70.330:FF:000012">
    <property type="entry name" value="RNA-binding motif, single-stranded-interacting protein 3 isoform 1"/>
    <property type="match status" value="1"/>
</dbReference>
<dbReference type="FunFam" id="3.30.70.330:FF:000014">
    <property type="entry name" value="RNA-binding motif, single-stranded-interacting protein 3 isoform 1"/>
    <property type="match status" value="1"/>
</dbReference>
<dbReference type="Gene3D" id="3.30.70.330">
    <property type="match status" value="2"/>
</dbReference>
<dbReference type="InterPro" id="IPR002343">
    <property type="entry name" value="Hud_Sxl_RNA"/>
</dbReference>
<dbReference type="InterPro" id="IPR012677">
    <property type="entry name" value="Nucleotide-bd_a/b_plait_sf"/>
</dbReference>
<dbReference type="InterPro" id="IPR035979">
    <property type="entry name" value="RBD_domain_sf"/>
</dbReference>
<dbReference type="InterPro" id="IPR034406">
    <property type="entry name" value="RBMS3_RRM2"/>
</dbReference>
<dbReference type="InterPro" id="IPR000504">
    <property type="entry name" value="RRM_dom"/>
</dbReference>
<dbReference type="PANTHER" id="PTHR24012">
    <property type="entry name" value="RNA BINDING PROTEIN"/>
    <property type="match status" value="1"/>
</dbReference>
<dbReference type="Pfam" id="PF00076">
    <property type="entry name" value="RRM_1"/>
    <property type="match status" value="2"/>
</dbReference>
<dbReference type="PRINTS" id="PR00961">
    <property type="entry name" value="HUDSXLRNA"/>
</dbReference>
<dbReference type="SMART" id="SM00360">
    <property type="entry name" value="RRM"/>
    <property type="match status" value="2"/>
</dbReference>
<dbReference type="SUPFAM" id="SSF54928">
    <property type="entry name" value="RNA-binding domain, RBD"/>
    <property type="match status" value="2"/>
</dbReference>
<dbReference type="PROSITE" id="PS50102">
    <property type="entry name" value="RRM"/>
    <property type="match status" value="2"/>
</dbReference>
<keyword id="KW-0025">Alternative splicing</keyword>
<keyword id="KW-0963">Cytoplasm</keyword>
<keyword id="KW-1267">Proteomics identification</keyword>
<keyword id="KW-1185">Reference proteome</keyword>
<keyword id="KW-0677">Repeat</keyword>
<keyword id="KW-0694">RNA-binding</keyword>